<name>PTH_SALDC</name>
<dbReference type="EC" id="3.1.1.29" evidence="1"/>
<dbReference type="EMBL" id="CP001144">
    <property type="protein sequence ID" value="ACH75212.1"/>
    <property type="molecule type" value="Genomic_DNA"/>
</dbReference>
<dbReference type="SMR" id="B5FU10"/>
<dbReference type="KEGG" id="sed:SeD_A1538"/>
<dbReference type="HOGENOM" id="CLU_062456_3_1_6"/>
<dbReference type="Proteomes" id="UP000008322">
    <property type="component" value="Chromosome"/>
</dbReference>
<dbReference type="GO" id="GO:0005737">
    <property type="term" value="C:cytoplasm"/>
    <property type="evidence" value="ECO:0007669"/>
    <property type="project" value="UniProtKB-SubCell"/>
</dbReference>
<dbReference type="GO" id="GO:0004045">
    <property type="term" value="F:peptidyl-tRNA hydrolase activity"/>
    <property type="evidence" value="ECO:0007669"/>
    <property type="project" value="UniProtKB-UniRule"/>
</dbReference>
<dbReference type="GO" id="GO:0000049">
    <property type="term" value="F:tRNA binding"/>
    <property type="evidence" value="ECO:0007669"/>
    <property type="project" value="UniProtKB-UniRule"/>
</dbReference>
<dbReference type="GO" id="GO:0006515">
    <property type="term" value="P:protein quality control for misfolded or incompletely synthesized proteins"/>
    <property type="evidence" value="ECO:0007669"/>
    <property type="project" value="UniProtKB-UniRule"/>
</dbReference>
<dbReference type="GO" id="GO:0072344">
    <property type="term" value="P:rescue of stalled ribosome"/>
    <property type="evidence" value="ECO:0007669"/>
    <property type="project" value="UniProtKB-UniRule"/>
</dbReference>
<dbReference type="CDD" id="cd00462">
    <property type="entry name" value="PTH"/>
    <property type="match status" value="1"/>
</dbReference>
<dbReference type="FunFam" id="3.40.50.1470:FF:000001">
    <property type="entry name" value="Peptidyl-tRNA hydrolase"/>
    <property type="match status" value="1"/>
</dbReference>
<dbReference type="Gene3D" id="3.40.50.1470">
    <property type="entry name" value="Peptidyl-tRNA hydrolase"/>
    <property type="match status" value="1"/>
</dbReference>
<dbReference type="HAMAP" id="MF_00083">
    <property type="entry name" value="Pept_tRNA_hydro_bact"/>
    <property type="match status" value="1"/>
</dbReference>
<dbReference type="InterPro" id="IPR001328">
    <property type="entry name" value="Pept_tRNA_hydro"/>
</dbReference>
<dbReference type="InterPro" id="IPR018171">
    <property type="entry name" value="Pept_tRNA_hydro_CS"/>
</dbReference>
<dbReference type="InterPro" id="IPR036416">
    <property type="entry name" value="Pept_tRNA_hydro_sf"/>
</dbReference>
<dbReference type="NCBIfam" id="TIGR00447">
    <property type="entry name" value="pth"/>
    <property type="match status" value="1"/>
</dbReference>
<dbReference type="PANTHER" id="PTHR17224">
    <property type="entry name" value="PEPTIDYL-TRNA HYDROLASE"/>
    <property type="match status" value="1"/>
</dbReference>
<dbReference type="PANTHER" id="PTHR17224:SF1">
    <property type="entry name" value="PEPTIDYL-TRNA HYDROLASE"/>
    <property type="match status" value="1"/>
</dbReference>
<dbReference type="Pfam" id="PF01195">
    <property type="entry name" value="Pept_tRNA_hydro"/>
    <property type="match status" value="1"/>
</dbReference>
<dbReference type="SUPFAM" id="SSF53178">
    <property type="entry name" value="Peptidyl-tRNA hydrolase-like"/>
    <property type="match status" value="1"/>
</dbReference>
<dbReference type="PROSITE" id="PS01195">
    <property type="entry name" value="PEPT_TRNA_HYDROL_1"/>
    <property type="match status" value="1"/>
</dbReference>
<dbReference type="PROSITE" id="PS01196">
    <property type="entry name" value="PEPT_TRNA_HYDROL_2"/>
    <property type="match status" value="1"/>
</dbReference>
<comment type="function">
    <text evidence="1">Hydrolyzes ribosome-free peptidyl-tRNAs (with 1 or more amino acids incorporated), which drop off the ribosome during protein synthesis, or as a result of ribosome stalling.</text>
</comment>
<comment type="function">
    <text evidence="1">Catalyzes the release of premature peptidyl moieties from peptidyl-tRNA molecules trapped in stalled 50S ribosomal subunits, and thus maintains levels of free tRNAs and 50S ribosomes.</text>
</comment>
<comment type="catalytic activity">
    <reaction evidence="1">
        <text>an N-acyl-L-alpha-aminoacyl-tRNA + H2O = an N-acyl-L-amino acid + a tRNA + H(+)</text>
        <dbReference type="Rhea" id="RHEA:54448"/>
        <dbReference type="Rhea" id="RHEA-COMP:10123"/>
        <dbReference type="Rhea" id="RHEA-COMP:13883"/>
        <dbReference type="ChEBI" id="CHEBI:15377"/>
        <dbReference type="ChEBI" id="CHEBI:15378"/>
        <dbReference type="ChEBI" id="CHEBI:59874"/>
        <dbReference type="ChEBI" id="CHEBI:78442"/>
        <dbReference type="ChEBI" id="CHEBI:138191"/>
        <dbReference type="EC" id="3.1.1.29"/>
    </reaction>
</comment>
<comment type="subunit">
    <text evidence="1">Monomer.</text>
</comment>
<comment type="subcellular location">
    <subcellularLocation>
        <location evidence="1">Cytoplasm</location>
    </subcellularLocation>
</comment>
<comment type="similarity">
    <text evidence="1">Belongs to the PTH family.</text>
</comment>
<feature type="chain" id="PRO_1000092979" description="Peptidyl-tRNA hydrolase">
    <location>
        <begin position="1"/>
        <end position="194"/>
    </location>
</feature>
<feature type="active site" description="Proton acceptor" evidence="1">
    <location>
        <position position="21"/>
    </location>
</feature>
<feature type="binding site" evidence="1">
    <location>
        <position position="16"/>
    </location>
    <ligand>
        <name>tRNA</name>
        <dbReference type="ChEBI" id="CHEBI:17843"/>
    </ligand>
</feature>
<feature type="binding site" evidence="1">
    <location>
        <position position="67"/>
    </location>
    <ligand>
        <name>tRNA</name>
        <dbReference type="ChEBI" id="CHEBI:17843"/>
    </ligand>
</feature>
<feature type="binding site" evidence="1">
    <location>
        <position position="69"/>
    </location>
    <ligand>
        <name>tRNA</name>
        <dbReference type="ChEBI" id="CHEBI:17843"/>
    </ligand>
</feature>
<feature type="binding site" evidence="1">
    <location>
        <position position="115"/>
    </location>
    <ligand>
        <name>tRNA</name>
        <dbReference type="ChEBI" id="CHEBI:17843"/>
    </ligand>
</feature>
<feature type="site" description="Discriminates between blocked and unblocked aminoacyl-tRNA" evidence="1">
    <location>
        <position position="11"/>
    </location>
</feature>
<feature type="site" description="Stabilizes the basic form of H active site to accept a proton" evidence="1">
    <location>
        <position position="94"/>
    </location>
</feature>
<keyword id="KW-0963">Cytoplasm</keyword>
<keyword id="KW-0378">Hydrolase</keyword>
<keyword id="KW-0694">RNA-binding</keyword>
<keyword id="KW-0820">tRNA-binding</keyword>
<reference key="1">
    <citation type="journal article" date="2011" name="J. Bacteriol.">
        <title>Comparative genomics of 28 Salmonella enterica isolates: evidence for CRISPR-mediated adaptive sublineage evolution.</title>
        <authorList>
            <person name="Fricke W.F."/>
            <person name="Mammel M.K."/>
            <person name="McDermott P.F."/>
            <person name="Tartera C."/>
            <person name="White D.G."/>
            <person name="Leclerc J.E."/>
            <person name="Ravel J."/>
            <person name="Cebula T.A."/>
        </authorList>
    </citation>
    <scope>NUCLEOTIDE SEQUENCE [LARGE SCALE GENOMIC DNA]</scope>
    <source>
        <strain>CT_02021853</strain>
    </source>
</reference>
<accession>B5FU10</accession>
<organism>
    <name type="scientific">Salmonella dublin (strain CT_02021853)</name>
    <dbReference type="NCBI Taxonomy" id="439851"/>
    <lineage>
        <taxon>Bacteria</taxon>
        <taxon>Pseudomonadati</taxon>
        <taxon>Pseudomonadota</taxon>
        <taxon>Gammaproteobacteria</taxon>
        <taxon>Enterobacterales</taxon>
        <taxon>Enterobacteriaceae</taxon>
        <taxon>Salmonella</taxon>
    </lineage>
</organism>
<proteinExistence type="inferred from homology"/>
<sequence>MAIKLIVGLANPGAEYAATRHNAGAWYVDLLAERLRAPLREEPKFFGYTSRITLEGEDVRLLVPTTFMNLSGKAVGTMASFYRIQPDEILVAHDELDLPPGVAKFKLGGGHGGHNGLKDIISKLGNNPNFHRLRVGIGHPGDKNKVVGFVLGKPPVSEQKLIDEAIDEAARCTELWFKEGLAKATSRLHTFKAQ</sequence>
<protein>
    <recommendedName>
        <fullName evidence="1">Peptidyl-tRNA hydrolase</fullName>
        <shortName evidence="1">Pth</shortName>
        <ecNumber evidence="1">3.1.1.29</ecNumber>
    </recommendedName>
</protein>
<evidence type="ECO:0000255" key="1">
    <source>
        <dbReference type="HAMAP-Rule" id="MF_00083"/>
    </source>
</evidence>
<gene>
    <name evidence="1" type="primary">pth</name>
    <name type="ordered locus">SeD_A1538</name>
</gene>